<organism>
    <name type="scientific">Emericella nidulans (strain FGSC A4 / ATCC 38163 / CBS 112.46 / NRRL 194 / M139)</name>
    <name type="common">Aspergillus nidulans</name>
    <dbReference type="NCBI Taxonomy" id="227321"/>
    <lineage>
        <taxon>Eukaryota</taxon>
        <taxon>Fungi</taxon>
        <taxon>Dikarya</taxon>
        <taxon>Ascomycota</taxon>
        <taxon>Pezizomycotina</taxon>
        <taxon>Eurotiomycetes</taxon>
        <taxon>Eurotiomycetidae</taxon>
        <taxon>Eurotiales</taxon>
        <taxon>Aspergillaceae</taxon>
        <taxon>Aspergillus</taxon>
        <taxon>Aspergillus subgen. Nidulantes</taxon>
    </lineage>
</organism>
<protein>
    <recommendedName>
        <fullName>Probable dipeptidyl-aminopeptidase B</fullName>
        <shortName>DPAP B</shortName>
        <ecNumber>3.4.14.5</ecNumber>
    </recommendedName>
</protein>
<reference key="1">
    <citation type="journal article" date="2003" name="Microbiology">
        <title>Genomics reveals sexual secrets of Aspergillus.</title>
        <authorList>
            <person name="Dyer P.S."/>
            <person name="Paoletti M."/>
            <person name="Archer D.B."/>
        </authorList>
    </citation>
    <scope>NUCLEOTIDE SEQUENCE [GENOMIC DNA]</scope>
    <source>
        <strain>FGSC A4 / ATCC 38163 / CBS 112.46 / NRRL 194 / M139</strain>
    </source>
</reference>
<reference key="2">
    <citation type="journal article" date="2005" name="Nature">
        <title>Sequencing of Aspergillus nidulans and comparative analysis with A. fumigatus and A. oryzae.</title>
        <authorList>
            <person name="Galagan J.E."/>
            <person name="Calvo S.E."/>
            <person name="Cuomo C."/>
            <person name="Ma L.-J."/>
            <person name="Wortman J.R."/>
            <person name="Batzoglou S."/>
            <person name="Lee S.-I."/>
            <person name="Bastuerkmen M."/>
            <person name="Spevak C.C."/>
            <person name="Clutterbuck J."/>
            <person name="Kapitonov V."/>
            <person name="Jurka J."/>
            <person name="Scazzocchio C."/>
            <person name="Farman M.L."/>
            <person name="Butler J."/>
            <person name="Purcell S."/>
            <person name="Harris S."/>
            <person name="Braus G.H."/>
            <person name="Draht O."/>
            <person name="Busch S."/>
            <person name="D'Enfert C."/>
            <person name="Bouchier C."/>
            <person name="Goldman G.H."/>
            <person name="Bell-Pedersen D."/>
            <person name="Griffiths-Jones S."/>
            <person name="Doonan J.H."/>
            <person name="Yu J."/>
            <person name="Vienken K."/>
            <person name="Pain A."/>
            <person name="Freitag M."/>
            <person name="Selker E.U."/>
            <person name="Archer D.B."/>
            <person name="Penalva M.A."/>
            <person name="Oakley B.R."/>
            <person name="Momany M."/>
            <person name="Tanaka T."/>
            <person name="Kumagai T."/>
            <person name="Asai K."/>
            <person name="Machida M."/>
            <person name="Nierman W.C."/>
            <person name="Denning D.W."/>
            <person name="Caddick M.X."/>
            <person name="Hynes M."/>
            <person name="Paoletti M."/>
            <person name="Fischer R."/>
            <person name="Miller B.L."/>
            <person name="Dyer P.S."/>
            <person name="Sachs M.S."/>
            <person name="Osmani S.A."/>
            <person name="Birren B.W."/>
        </authorList>
    </citation>
    <scope>NUCLEOTIDE SEQUENCE [LARGE SCALE GENOMIC DNA]</scope>
    <source>
        <strain>FGSC A4 / ATCC 38163 / CBS 112.46 / NRRL 194 / M139</strain>
    </source>
</reference>
<reference key="3">
    <citation type="journal article" date="2009" name="Fungal Genet. Biol.">
        <title>The 2008 update of the Aspergillus nidulans genome annotation: a community effort.</title>
        <authorList>
            <person name="Wortman J.R."/>
            <person name="Gilsenan J.M."/>
            <person name="Joardar V."/>
            <person name="Deegan J."/>
            <person name="Clutterbuck J."/>
            <person name="Andersen M.R."/>
            <person name="Archer D."/>
            <person name="Bencina M."/>
            <person name="Braus G."/>
            <person name="Coutinho P."/>
            <person name="von Dohren H."/>
            <person name="Doonan J."/>
            <person name="Driessen A.J."/>
            <person name="Durek P."/>
            <person name="Espeso E."/>
            <person name="Fekete E."/>
            <person name="Flipphi M."/>
            <person name="Estrada C.G."/>
            <person name="Geysens S."/>
            <person name="Goldman G."/>
            <person name="de Groot P.W."/>
            <person name="Hansen K."/>
            <person name="Harris S.D."/>
            <person name="Heinekamp T."/>
            <person name="Helmstaedt K."/>
            <person name="Henrissat B."/>
            <person name="Hofmann G."/>
            <person name="Homan T."/>
            <person name="Horio T."/>
            <person name="Horiuchi H."/>
            <person name="James S."/>
            <person name="Jones M."/>
            <person name="Karaffa L."/>
            <person name="Karanyi Z."/>
            <person name="Kato M."/>
            <person name="Keller N."/>
            <person name="Kelly D.E."/>
            <person name="Kiel J.A."/>
            <person name="Kim J.M."/>
            <person name="van der Klei I.J."/>
            <person name="Klis F.M."/>
            <person name="Kovalchuk A."/>
            <person name="Krasevec N."/>
            <person name="Kubicek C.P."/>
            <person name="Liu B."/>
            <person name="Maccabe A."/>
            <person name="Meyer V."/>
            <person name="Mirabito P."/>
            <person name="Miskei M."/>
            <person name="Mos M."/>
            <person name="Mullins J."/>
            <person name="Nelson D.R."/>
            <person name="Nielsen J."/>
            <person name="Oakley B.R."/>
            <person name="Osmani S.A."/>
            <person name="Pakula T."/>
            <person name="Paszewski A."/>
            <person name="Paulsen I."/>
            <person name="Pilsyk S."/>
            <person name="Pocsi I."/>
            <person name="Punt P.J."/>
            <person name="Ram A.F."/>
            <person name="Ren Q."/>
            <person name="Robellet X."/>
            <person name="Robson G."/>
            <person name="Seiboth B."/>
            <person name="van Solingen P."/>
            <person name="Specht T."/>
            <person name="Sun J."/>
            <person name="Taheri-Talesh N."/>
            <person name="Takeshita N."/>
            <person name="Ussery D."/>
            <person name="vanKuyk P.A."/>
            <person name="Visser H."/>
            <person name="van de Vondervoort P.J."/>
            <person name="de Vries R.P."/>
            <person name="Walton J."/>
            <person name="Xiang X."/>
            <person name="Xiong Y."/>
            <person name="Zeng A.P."/>
            <person name="Brandt B.W."/>
            <person name="Cornell M.J."/>
            <person name="van den Hondel C.A."/>
            <person name="Visser J."/>
            <person name="Oliver S.G."/>
            <person name="Turner G."/>
        </authorList>
    </citation>
    <scope>GENOME REANNOTATION</scope>
    <source>
        <strain>FGSC A4 / ATCC 38163 / CBS 112.46 / NRRL 194 / M139</strain>
    </source>
</reference>
<dbReference type="EC" id="3.4.14.5"/>
<dbReference type="EMBL" id="BK001296">
    <property type="protein sequence ID" value="DAA01787.1"/>
    <property type="status" value="ALT_SEQ"/>
    <property type="molecule type" value="Genomic_DNA"/>
</dbReference>
<dbReference type="EMBL" id="AACD01000051">
    <property type="protein sequence ID" value="EAA63517.1"/>
    <property type="status" value="ALT_SEQ"/>
    <property type="molecule type" value="Genomic_DNA"/>
</dbReference>
<dbReference type="EMBL" id="BN001306">
    <property type="protein sequence ID" value="CBF83695.1"/>
    <property type="molecule type" value="Genomic_DNA"/>
</dbReference>
<dbReference type="RefSeq" id="XP_660550.1">
    <property type="nucleotide sequence ID" value="XM_655458.1"/>
</dbReference>
<dbReference type="SMR" id="Q5B934"/>
<dbReference type="FunCoup" id="Q5B934">
    <property type="interactions" value="319"/>
</dbReference>
<dbReference type="STRING" id="227321.Q5B934"/>
<dbReference type="ESTHER" id="emeni-q7si80">
    <property type="family name" value="DPP4N_Peptidase_S9"/>
</dbReference>
<dbReference type="GlyCosmos" id="Q5B934">
    <property type="glycosylation" value="3 sites, No reported glycans"/>
</dbReference>
<dbReference type="EnsemblFungi" id="CBF83695">
    <property type="protein sequence ID" value="CBF83695"/>
    <property type="gene ID" value="ANIA_02946"/>
</dbReference>
<dbReference type="VEuPathDB" id="FungiDB:AN2946"/>
<dbReference type="eggNOG" id="KOG2100">
    <property type="taxonomic scope" value="Eukaryota"/>
</dbReference>
<dbReference type="HOGENOM" id="CLU_006105_0_1_1"/>
<dbReference type="InParanoid" id="Q5B934"/>
<dbReference type="OMA" id="MRTPQEN"/>
<dbReference type="OrthoDB" id="16520at2759"/>
<dbReference type="Proteomes" id="UP000000560">
    <property type="component" value="Chromosome VI"/>
</dbReference>
<dbReference type="GO" id="GO:0000329">
    <property type="term" value="C:fungal-type vacuole membrane"/>
    <property type="evidence" value="ECO:0007669"/>
    <property type="project" value="EnsemblFungi"/>
</dbReference>
<dbReference type="GO" id="GO:0005886">
    <property type="term" value="C:plasma membrane"/>
    <property type="evidence" value="ECO:0000318"/>
    <property type="project" value="GO_Central"/>
</dbReference>
<dbReference type="GO" id="GO:0004177">
    <property type="term" value="F:aminopeptidase activity"/>
    <property type="evidence" value="ECO:0007669"/>
    <property type="project" value="UniProtKB-KW"/>
</dbReference>
<dbReference type="GO" id="GO:0008239">
    <property type="term" value="F:dipeptidyl-peptidase activity"/>
    <property type="evidence" value="ECO:0000318"/>
    <property type="project" value="GO_Central"/>
</dbReference>
<dbReference type="GO" id="GO:0008236">
    <property type="term" value="F:serine-type peptidase activity"/>
    <property type="evidence" value="ECO:0007669"/>
    <property type="project" value="UniProtKB-KW"/>
</dbReference>
<dbReference type="GO" id="GO:0006508">
    <property type="term" value="P:proteolysis"/>
    <property type="evidence" value="ECO:0000318"/>
    <property type="project" value="GO_Central"/>
</dbReference>
<dbReference type="FunFam" id="3.40.50.1820:FF:000003">
    <property type="entry name" value="Dipeptidyl peptidase 4"/>
    <property type="match status" value="1"/>
</dbReference>
<dbReference type="Gene3D" id="3.40.50.1820">
    <property type="entry name" value="alpha/beta hydrolase"/>
    <property type="match status" value="1"/>
</dbReference>
<dbReference type="Gene3D" id="2.140.10.30">
    <property type="entry name" value="Dipeptidylpeptidase IV, N-terminal domain"/>
    <property type="match status" value="1"/>
</dbReference>
<dbReference type="InterPro" id="IPR029058">
    <property type="entry name" value="AB_hydrolase_fold"/>
</dbReference>
<dbReference type="InterPro" id="IPR001375">
    <property type="entry name" value="Peptidase_S9_cat"/>
</dbReference>
<dbReference type="InterPro" id="IPR002469">
    <property type="entry name" value="Peptidase_S9B_N"/>
</dbReference>
<dbReference type="InterPro" id="IPR050278">
    <property type="entry name" value="Serine_Prot_S9B/DPPIV"/>
</dbReference>
<dbReference type="PANTHER" id="PTHR11731:SF200">
    <property type="entry name" value="DIPEPTIDYL PEPTIDASE 10, ISOFORM B"/>
    <property type="match status" value="1"/>
</dbReference>
<dbReference type="PANTHER" id="PTHR11731">
    <property type="entry name" value="PROTEASE FAMILY S9B,C DIPEPTIDYL-PEPTIDASE IV-RELATED"/>
    <property type="match status" value="1"/>
</dbReference>
<dbReference type="Pfam" id="PF00930">
    <property type="entry name" value="DPPIV_N"/>
    <property type="match status" value="1"/>
</dbReference>
<dbReference type="Pfam" id="PF00326">
    <property type="entry name" value="Peptidase_S9"/>
    <property type="match status" value="1"/>
</dbReference>
<dbReference type="SUPFAM" id="SSF53474">
    <property type="entry name" value="alpha/beta-Hydrolases"/>
    <property type="match status" value="1"/>
</dbReference>
<dbReference type="SUPFAM" id="SSF82171">
    <property type="entry name" value="DPP6 N-terminal domain-like"/>
    <property type="match status" value="1"/>
</dbReference>
<gene>
    <name type="primary">dapB</name>
    <name type="synonym">ste13</name>
    <name type="ORF">AN2946</name>
</gene>
<feature type="chain" id="PRO_0000412145" description="Probable dipeptidyl-aminopeptidase B">
    <location>
        <begin position="1"/>
        <end position="906"/>
    </location>
</feature>
<feature type="topological domain" description="Cytoplasmic" evidence="2">
    <location>
        <begin position="1"/>
        <end position="85"/>
    </location>
</feature>
<feature type="transmembrane region" description="Helical; Signal-anchor for type II membrane protein" evidence="2">
    <location>
        <begin position="86"/>
        <end position="106"/>
    </location>
</feature>
<feature type="topological domain" description="Vacuolar" evidence="2">
    <location>
        <begin position="107"/>
        <end position="906"/>
    </location>
</feature>
<feature type="region of interest" description="Disordered" evidence="3">
    <location>
        <begin position="1"/>
        <end position="33"/>
    </location>
</feature>
<feature type="compositionally biased region" description="Acidic residues" evidence="3">
    <location>
        <begin position="1"/>
        <end position="11"/>
    </location>
</feature>
<feature type="compositionally biased region" description="Low complexity" evidence="3">
    <location>
        <begin position="21"/>
        <end position="33"/>
    </location>
</feature>
<feature type="active site" description="Charge relay system" evidence="1">
    <location>
        <position position="743"/>
    </location>
</feature>
<feature type="active site" description="Charge relay system" evidence="1">
    <location>
        <position position="820"/>
    </location>
</feature>
<feature type="active site" description="Charge relay system" evidence="1">
    <location>
        <position position="853"/>
    </location>
</feature>
<feature type="glycosylation site" description="N-linked (GlcNAc...) asparagine" evidence="2">
    <location>
        <position position="338"/>
    </location>
</feature>
<feature type="glycosylation site" description="N-linked (GlcNAc...) asparagine" evidence="2">
    <location>
        <position position="629"/>
    </location>
</feature>
<feature type="glycosylation site" description="N-linked (GlcNAc...) asparagine" evidence="2">
    <location>
        <position position="797"/>
    </location>
</feature>
<keyword id="KW-0031">Aminopeptidase</keyword>
<keyword id="KW-0325">Glycoprotein</keyword>
<keyword id="KW-0378">Hydrolase</keyword>
<keyword id="KW-0472">Membrane</keyword>
<keyword id="KW-0645">Protease</keyword>
<keyword id="KW-1185">Reference proteome</keyword>
<keyword id="KW-0720">Serine protease</keyword>
<keyword id="KW-0735">Signal-anchor</keyword>
<keyword id="KW-0812">Transmembrane</keyword>
<keyword id="KW-1133">Transmembrane helix</keyword>
<keyword id="KW-0926">Vacuole</keyword>
<proteinExistence type="inferred from homology"/>
<evidence type="ECO:0000250" key="1"/>
<evidence type="ECO:0000255" key="2"/>
<evidence type="ECO:0000256" key="3">
    <source>
        <dbReference type="SAM" id="MobiDB-lite"/>
    </source>
</evidence>
<evidence type="ECO:0000305" key="4"/>
<sequence>MRSSEDREDSELLPANRPRSPSRSSYDSDDSGLSVDSILEEQKYNAATNETLGLPQEMRYHDEEGGEAGSNEALHTKASSSRSRRLLWLVVLLCCGGWVVAFVLFITQGRADYRTATDELQSDNSGSFSDGTSSGKPLTLQQVLSGVFLPRGHAISWVAGPDGEDGLLIERGEDDEAGYLRINDIRQDGKVNRVLMQKPTVGVDGRTIKPSATRPSPDLKKVLIISNQEKNWRHSFTASYWIFDVETQTAEPLDPNNIDGRVQLALWSPKSDAIAFVRDNNLYLRKLSSERVVPITKDGGEQLFYGVPDWVYEEEVFSGNSVTWWSEDGSQIAFIRTNESAVPEFPVQYFLSRPSGKKPQPGLENYPEVREIKYPKAGAPNPFVNLQFYDVEQGEVFSVDTPDDFDDDDRLIIEVIWAAKGKVLVRTTNRESDILKVFLVDTESRESKLIRIQDISELDGGWVEPTQSVRFIPADPDKGRPFDGYLDTVVHEGYDHLAYFTPLDNPEPIMLTSGEWEVVDAPTAVDLTRGLVYFIATKEAPTERHLYRVRLDGSDLTPLTDTSQPGYYSVSFSDGAGYALLSYQGPSIPWQSIISTEGEKTTTLRIIEDNTDLSKLVAQYALPTENYQNITIDGFTLQVVERRPPHFNPARKYPVLFHLYGGPGSQTVDRRFNVDFQSYVAASLGYIVVTVDGRGTGFIGRAARCIIRGNIGHYEAIDQIATAKNWAQKPYVDESRMAIWGWSYGGFMTLKTLEQDAGETFQYGMAVAPVTDWRFYDSVYTERYMHTPQHNPTGYDNTSISDMAALHNNVRFLVIHGASDDNVHIQNTLTLIDKLDLASVQNYDVHFYPDSDHSIFFHNAHTMVYERLASWLVNAFNGEWHRTANPVPDESMLRRLAKRVWPGFAH</sequence>
<comment type="function">
    <text evidence="1">Type IV dipeptidyl-peptidase which removes N-terminal dipeptides sequentially from polypeptides having unsubstituted N-termini provided that the penultimate residue is proline.</text>
</comment>
<comment type="catalytic activity">
    <reaction>
        <text>Release of an N-terminal dipeptide, Xaa-Yaa-|-Zaa-, from a polypeptide, preferentially when Yaa is Pro, provided Zaa is neither Pro nor hydroxyproline.</text>
        <dbReference type="EC" id="3.4.14.5"/>
    </reaction>
</comment>
<comment type="subcellular location">
    <subcellularLocation>
        <location evidence="1">Vacuole membrane</location>
        <topology evidence="1">Single-pass type II membrane protein</topology>
    </subcellularLocation>
    <text evidence="1">Lysosome-like vacuoles.</text>
</comment>
<comment type="similarity">
    <text evidence="4">Belongs to the peptidase S9B family.</text>
</comment>
<comment type="sequence caution" evidence="4">
    <conflict type="erroneous gene model prediction">
        <sequence resource="EMBL-CDS" id="DAA01787"/>
    </conflict>
</comment>
<comment type="sequence caution" evidence="4">
    <conflict type="erroneous gene model prediction">
        <sequence resource="EMBL-CDS" id="EAA63517"/>
    </conflict>
</comment>
<name>DAPB_EMENI</name>
<accession>Q5B934</accession>
<accession>C8VJ32</accession>
<accession>Q7SI80</accession>